<feature type="chain" id="PRO_0000254762" description="Cytochrome b">
    <location>
        <begin position="1"/>
        <end position="379"/>
    </location>
</feature>
<feature type="transmembrane region" description="Helical" evidence="2">
    <location>
        <begin position="33"/>
        <end position="53"/>
    </location>
</feature>
<feature type="transmembrane region" description="Helical" evidence="2">
    <location>
        <begin position="77"/>
        <end position="98"/>
    </location>
</feature>
<feature type="transmembrane region" description="Helical" evidence="2">
    <location>
        <begin position="113"/>
        <end position="133"/>
    </location>
</feature>
<feature type="transmembrane region" description="Helical" evidence="2">
    <location>
        <begin position="178"/>
        <end position="198"/>
    </location>
</feature>
<feature type="transmembrane region" description="Helical" evidence="2">
    <location>
        <begin position="226"/>
        <end position="246"/>
    </location>
</feature>
<feature type="transmembrane region" description="Helical" evidence="2">
    <location>
        <begin position="288"/>
        <end position="308"/>
    </location>
</feature>
<feature type="transmembrane region" description="Helical" evidence="2">
    <location>
        <begin position="320"/>
        <end position="340"/>
    </location>
</feature>
<feature type="transmembrane region" description="Helical" evidence="2">
    <location>
        <begin position="347"/>
        <end position="367"/>
    </location>
</feature>
<feature type="binding site" description="axial binding residue" evidence="2">
    <location>
        <position position="83"/>
    </location>
    <ligand>
        <name>heme b</name>
        <dbReference type="ChEBI" id="CHEBI:60344"/>
        <label>b562</label>
    </ligand>
    <ligandPart>
        <name>Fe</name>
        <dbReference type="ChEBI" id="CHEBI:18248"/>
    </ligandPart>
</feature>
<feature type="binding site" description="axial binding residue" evidence="2">
    <location>
        <position position="97"/>
    </location>
    <ligand>
        <name>heme b</name>
        <dbReference type="ChEBI" id="CHEBI:60344"/>
        <label>b566</label>
    </ligand>
    <ligandPart>
        <name>Fe</name>
        <dbReference type="ChEBI" id="CHEBI:18248"/>
    </ligandPart>
</feature>
<feature type="binding site" description="axial binding residue" evidence="2">
    <location>
        <position position="182"/>
    </location>
    <ligand>
        <name>heme b</name>
        <dbReference type="ChEBI" id="CHEBI:60344"/>
        <label>b562</label>
    </ligand>
    <ligandPart>
        <name>Fe</name>
        <dbReference type="ChEBI" id="CHEBI:18248"/>
    </ligandPart>
</feature>
<feature type="binding site" description="axial binding residue" evidence="2">
    <location>
        <position position="196"/>
    </location>
    <ligand>
        <name>heme b</name>
        <dbReference type="ChEBI" id="CHEBI:60344"/>
        <label>b566</label>
    </ligand>
    <ligandPart>
        <name>Fe</name>
        <dbReference type="ChEBI" id="CHEBI:18248"/>
    </ligandPart>
</feature>
<feature type="binding site" evidence="2">
    <location>
        <position position="201"/>
    </location>
    <ligand>
        <name>a ubiquinone</name>
        <dbReference type="ChEBI" id="CHEBI:16389"/>
    </ligand>
</feature>
<comment type="function">
    <text evidence="2">Component of the ubiquinol-cytochrome c reductase complex (complex III or cytochrome b-c1 complex) that is part of the mitochondrial respiratory chain. The b-c1 complex mediates electron transfer from ubiquinol to cytochrome c. Contributes to the generation of a proton gradient across the mitochondrial membrane that is then used for ATP synthesis.</text>
</comment>
<comment type="cofactor">
    <cofactor evidence="2">
        <name>heme b</name>
        <dbReference type="ChEBI" id="CHEBI:60344"/>
    </cofactor>
    <text evidence="2">Binds 2 heme b groups non-covalently.</text>
</comment>
<comment type="subunit">
    <text evidence="2">The cytochrome bc1 complex contains 11 subunits: 3 respiratory subunits (MT-CYB, CYC1 and UQCRFS1), 2 core proteins (UQCRC1 and UQCRC2) and 6 low-molecular weight proteins (UQCRH/QCR6, UQCRB/QCR7, UQCRQ/QCR8, UQCR10/QCR9, UQCR11/QCR10 and a cleavage product of UQCRFS1). This cytochrome bc1 complex then forms a dimer.</text>
</comment>
<comment type="subcellular location">
    <subcellularLocation>
        <location evidence="2">Mitochondrion inner membrane</location>
        <topology evidence="2">Multi-pass membrane protein</topology>
    </subcellularLocation>
</comment>
<comment type="miscellaneous">
    <text evidence="1">Heme 1 (or BL or b562) is low-potential and absorbs at about 562 nm, and heme 2 (or BH or b566) is high-potential and absorbs at about 566 nm.</text>
</comment>
<comment type="similarity">
    <text evidence="3 4">Belongs to the cytochrome b family.</text>
</comment>
<comment type="caution">
    <text evidence="2">The full-length protein contains only eight transmembrane helices, not nine as predicted by bioinformatics tools.</text>
</comment>
<proteinExistence type="inferred from homology"/>
<accession>Q3LZS3</accession>
<geneLocation type="mitochondrion"/>
<gene>
    <name type="primary">MT-CYB</name>
    <name type="synonym">COB</name>
    <name type="synonym">CYTB</name>
    <name type="synonym">MTCYB</name>
</gene>
<dbReference type="EMBL" id="DQ086827">
    <property type="protein sequence ID" value="AAZ78649.1"/>
    <property type="molecule type" value="Genomic_DNA"/>
</dbReference>
<dbReference type="SMR" id="Q3LZS3"/>
<dbReference type="GO" id="GO:0005743">
    <property type="term" value="C:mitochondrial inner membrane"/>
    <property type="evidence" value="ECO:0007669"/>
    <property type="project" value="UniProtKB-SubCell"/>
</dbReference>
<dbReference type="GO" id="GO:0045275">
    <property type="term" value="C:respiratory chain complex III"/>
    <property type="evidence" value="ECO:0007669"/>
    <property type="project" value="InterPro"/>
</dbReference>
<dbReference type="GO" id="GO:0046872">
    <property type="term" value="F:metal ion binding"/>
    <property type="evidence" value="ECO:0007669"/>
    <property type="project" value="UniProtKB-KW"/>
</dbReference>
<dbReference type="GO" id="GO:0008121">
    <property type="term" value="F:ubiquinol-cytochrome-c reductase activity"/>
    <property type="evidence" value="ECO:0007669"/>
    <property type="project" value="InterPro"/>
</dbReference>
<dbReference type="GO" id="GO:0006122">
    <property type="term" value="P:mitochondrial electron transport, ubiquinol to cytochrome c"/>
    <property type="evidence" value="ECO:0007669"/>
    <property type="project" value="TreeGrafter"/>
</dbReference>
<dbReference type="CDD" id="cd00290">
    <property type="entry name" value="cytochrome_b_C"/>
    <property type="match status" value="1"/>
</dbReference>
<dbReference type="CDD" id="cd00284">
    <property type="entry name" value="Cytochrome_b_N"/>
    <property type="match status" value="1"/>
</dbReference>
<dbReference type="FunFam" id="1.20.810.10:FF:000002">
    <property type="entry name" value="Cytochrome b"/>
    <property type="match status" value="1"/>
</dbReference>
<dbReference type="Gene3D" id="1.20.810.10">
    <property type="entry name" value="Cytochrome Bc1 Complex, Chain C"/>
    <property type="match status" value="1"/>
</dbReference>
<dbReference type="InterPro" id="IPR005798">
    <property type="entry name" value="Cyt_b/b6_C"/>
</dbReference>
<dbReference type="InterPro" id="IPR036150">
    <property type="entry name" value="Cyt_b/b6_C_sf"/>
</dbReference>
<dbReference type="InterPro" id="IPR005797">
    <property type="entry name" value="Cyt_b/b6_N"/>
</dbReference>
<dbReference type="InterPro" id="IPR027387">
    <property type="entry name" value="Cytb/b6-like_sf"/>
</dbReference>
<dbReference type="InterPro" id="IPR030689">
    <property type="entry name" value="Cytochrome_b"/>
</dbReference>
<dbReference type="InterPro" id="IPR048260">
    <property type="entry name" value="Cytochrome_b_C_euk/bac"/>
</dbReference>
<dbReference type="InterPro" id="IPR048259">
    <property type="entry name" value="Cytochrome_b_N_euk/bac"/>
</dbReference>
<dbReference type="InterPro" id="IPR016174">
    <property type="entry name" value="Di-haem_cyt_TM"/>
</dbReference>
<dbReference type="PANTHER" id="PTHR19271">
    <property type="entry name" value="CYTOCHROME B"/>
    <property type="match status" value="1"/>
</dbReference>
<dbReference type="PANTHER" id="PTHR19271:SF16">
    <property type="entry name" value="CYTOCHROME B"/>
    <property type="match status" value="1"/>
</dbReference>
<dbReference type="Pfam" id="PF00032">
    <property type="entry name" value="Cytochrom_B_C"/>
    <property type="match status" value="1"/>
</dbReference>
<dbReference type="Pfam" id="PF00033">
    <property type="entry name" value="Cytochrome_B"/>
    <property type="match status" value="1"/>
</dbReference>
<dbReference type="PIRSF" id="PIRSF038885">
    <property type="entry name" value="COB"/>
    <property type="match status" value="1"/>
</dbReference>
<dbReference type="SUPFAM" id="SSF81648">
    <property type="entry name" value="a domain/subunit of cytochrome bc1 complex (Ubiquinol-cytochrome c reductase)"/>
    <property type="match status" value="1"/>
</dbReference>
<dbReference type="SUPFAM" id="SSF81342">
    <property type="entry name" value="Transmembrane di-heme cytochromes"/>
    <property type="match status" value="1"/>
</dbReference>
<dbReference type="PROSITE" id="PS51003">
    <property type="entry name" value="CYTB_CTER"/>
    <property type="match status" value="1"/>
</dbReference>
<dbReference type="PROSITE" id="PS51002">
    <property type="entry name" value="CYTB_NTER"/>
    <property type="match status" value="1"/>
</dbReference>
<protein>
    <recommendedName>
        <fullName>Cytochrome b</fullName>
    </recommendedName>
    <alternativeName>
        <fullName>Complex III subunit 3</fullName>
    </alternativeName>
    <alternativeName>
        <fullName>Complex III subunit III</fullName>
    </alternativeName>
    <alternativeName>
        <fullName>Cytochrome b-c1 complex subunit 3</fullName>
    </alternativeName>
    <alternativeName>
        <fullName>Ubiquinol-cytochrome-c reductase complex cytochrome b subunit</fullName>
    </alternativeName>
</protein>
<keyword id="KW-0249">Electron transport</keyword>
<keyword id="KW-0349">Heme</keyword>
<keyword id="KW-0408">Iron</keyword>
<keyword id="KW-0472">Membrane</keyword>
<keyword id="KW-0479">Metal-binding</keyword>
<keyword id="KW-0496">Mitochondrion</keyword>
<keyword id="KW-0999">Mitochondrion inner membrane</keyword>
<keyword id="KW-0679">Respiratory chain</keyword>
<keyword id="KW-0812">Transmembrane</keyword>
<keyword id="KW-1133">Transmembrane helix</keyword>
<keyword id="KW-0813">Transport</keyword>
<keyword id="KW-0830">Ubiquinone</keyword>
<name>CYB_SOTGU</name>
<reference key="1">
    <citation type="submission" date="2005-06" db="EMBL/GenBank/DDBJ databases">
        <title>Riverine and marine ecotypes of Sotalia dolphins are different species.</title>
        <authorList>
            <person name="Cunha H.A."/>
            <person name="Sole-Cava A.M."/>
        </authorList>
    </citation>
    <scope>NUCLEOTIDE SEQUENCE [GENOMIC DNA]</scope>
</reference>
<sequence length="379" mass="42712">MTNIRKTHPLMKILNNAFIDLPTPSSISSWWNFGSLLGLCLIMQILTGLFLAMHYTPDTSTAFSSVAHICRDVNYGWFIRYLHANGASMFFICLYAHIGRGLYYGSYMFQETWNIGVLLLLTVMATAFVGYVLPWGQMSFWGATVITNLLSAIPYIGTTLVEWIWGGFSVDKATLTRFFAFHFILPFIITALAAVHLLFLHETGSNNPTGIPSNMDMIPFHPYYTIKDILGALLLILTLLALTLFTPDLLGDPDNYTPANPLSTPAHIKPEWYFLFAYAILRSIPNKLGGVLALLLSILILIFIPMLQTSKQRSMMFRPFSQLLFWTLIADLLTLTWIGGQPVEHPYIIVGQLASILYFLLILVLMPTVGLIENKLLKW</sequence>
<organism>
    <name type="scientific">Sotalia guianensis</name>
    <name type="common">Guyana river dolphin</name>
    <name type="synonym">Sotalia fluviatilis subsp. guianensis</name>
    <dbReference type="NCBI Taxonomy" id="338729"/>
    <lineage>
        <taxon>Eukaryota</taxon>
        <taxon>Metazoa</taxon>
        <taxon>Chordata</taxon>
        <taxon>Craniata</taxon>
        <taxon>Vertebrata</taxon>
        <taxon>Euteleostomi</taxon>
        <taxon>Mammalia</taxon>
        <taxon>Eutheria</taxon>
        <taxon>Laurasiatheria</taxon>
        <taxon>Artiodactyla</taxon>
        <taxon>Whippomorpha</taxon>
        <taxon>Cetacea</taxon>
        <taxon>Odontoceti</taxon>
        <taxon>Delphinidae</taxon>
        <taxon>Sotalia</taxon>
    </lineage>
</organism>
<evidence type="ECO:0000250" key="1"/>
<evidence type="ECO:0000250" key="2">
    <source>
        <dbReference type="UniProtKB" id="P00157"/>
    </source>
</evidence>
<evidence type="ECO:0000255" key="3">
    <source>
        <dbReference type="PROSITE-ProRule" id="PRU00967"/>
    </source>
</evidence>
<evidence type="ECO:0000255" key="4">
    <source>
        <dbReference type="PROSITE-ProRule" id="PRU00968"/>
    </source>
</evidence>